<feature type="chain" id="PRO_1000142680" description="Large ribosomal subunit protein uL18">
    <location>
        <begin position="1"/>
        <end position="195"/>
    </location>
</feature>
<accession>B1L785</accession>
<dbReference type="EMBL" id="CP000968">
    <property type="protein sequence ID" value="ACB08314.1"/>
    <property type="molecule type" value="Genomic_DNA"/>
</dbReference>
<dbReference type="RefSeq" id="WP_012310211.1">
    <property type="nucleotide sequence ID" value="NC_010482.1"/>
</dbReference>
<dbReference type="SMR" id="B1L785"/>
<dbReference type="FunCoup" id="B1L785">
    <property type="interactions" value="166"/>
</dbReference>
<dbReference type="STRING" id="374847.Kcr_1569"/>
<dbReference type="EnsemblBacteria" id="ACB08314">
    <property type="protein sequence ID" value="ACB08314"/>
    <property type="gene ID" value="Kcr_1569"/>
</dbReference>
<dbReference type="GeneID" id="6094845"/>
<dbReference type="KEGG" id="kcr:Kcr_1569"/>
<dbReference type="eggNOG" id="arCOG04088">
    <property type="taxonomic scope" value="Archaea"/>
</dbReference>
<dbReference type="HOGENOM" id="CLU_056222_2_0_2"/>
<dbReference type="InParanoid" id="B1L785"/>
<dbReference type="OrthoDB" id="8644at2157"/>
<dbReference type="PhylomeDB" id="B1L785"/>
<dbReference type="Proteomes" id="UP000001686">
    <property type="component" value="Chromosome"/>
</dbReference>
<dbReference type="GO" id="GO:0022625">
    <property type="term" value="C:cytosolic large ribosomal subunit"/>
    <property type="evidence" value="ECO:0000318"/>
    <property type="project" value="GO_Central"/>
</dbReference>
<dbReference type="GO" id="GO:0008097">
    <property type="term" value="F:5S rRNA binding"/>
    <property type="evidence" value="ECO:0000318"/>
    <property type="project" value="GO_Central"/>
</dbReference>
<dbReference type="GO" id="GO:0003735">
    <property type="term" value="F:structural constituent of ribosome"/>
    <property type="evidence" value="ECO:0000318"/>
    <property type="project" value="GO_Central"/>
</dbReference>
<dbReference type="GO" id="GO:0000027">
    <property type="term" value="P:ribosomal large subunit assembly"/>
    <property type="evidence" value="ECO:0000318"/>
    <property type="project" value="GO_Central"/>
</dbReference>
<dbReference type="GO" id="GO:0006412">
    <property type="term" value="P:translation"/>
    <property type="evidence" value="ECO:0007669"/>
    <property type="project" value="UniProtKB-UniRule"/>
</dbReference>
<dbReference type="CDD" id="cd00432">
    <property type="entry name" value="Ribosomal_L18_L5e"/>
    <property type="match status" value="1"/>
</dbReference>
<dbReference type="Gene3D" id="3.30.420.100">
    <property type="match status" value="1"/>
</dbReference>
<dbReference type="HAMAP" id="MF_01337_A">
    <property type="entry name" value="Ribosomal_uL18_A"/>
    <property type="match status" value="1"/>
</dbReference>
<dbReference type="InterPro" id="IPR005485">
    <property type="entry name" value="Rbsml_uL18_euk"/>
</dbReference>
<dbReference type="NCBIfam" id="NF006342">
    <property type="entry name" value="PRK08569.1"/>
    <property type="match status" value="1"/>
</dbReference>
<dbReference type="PANTHER" id="PTHR23410:SF12">
    <property type="entry name" value="LARGE RIBOSOMAL SUBUNIT PROTEIN UL18"/>
    <property type="match status" value="1"/>
</dbReference>
<dbReference type="PANTHER" id="PTHR23410">
    <property type="entry name" value="RIBOSOMAL PROTEIN L5-RELATED"/>
    <property type="match status" value="1"/>
</dbReference>
<dbReference type="Pfam" id="PF17144">
    <property type="entry name" value="Ribosomal_L5e"/>
    <property type="match status" value="2"/>
</dbReference>
<dbReference type="SUPFAM" id="SSF53137">
    <property type="entry name" value="Translational machinery components"/>
    <property type="match status" value="1"/>
</dbReference>
<gene>
    <name evidence="1" type="primary">rpl18</name>
    <name type="ordered locus">Kcr_1569</name>
</gene>
<proteinExistence type="inferred from homology"/>
<name>RL18_KORCO</name>
<evidence type="ECO:0000255" key="1">
    <source>
        <dbReference type="HAMAP-Rule" id="MF_01337"/>
    </source>
</evidence>
<evidence type="ECO:0000305" key="2"/>
<organism>
    <name type="scientific">Korarchaeum cryptofilum (strain OPF8)</name>
    <dbReference type="NCBI Taxonomy" id="374847"/>
    <lineage>
        <taxon>Archaea</taxon>
        <taxon>Thermoproteota</taxon>
        <taxon>Candidatus Korarchaeia</taxon>
        <taxon>Candidatus Korarchaeales</taxon>
        <taxon>Candidatus Korarchaeaceae</taxon>
        <taxon>Candidatus Korarchaeum</taxon>
    </lineage>
</organism>
<reference key="1">
    <citation type="journal article" date="2008" name="Proc. Natl. Acad. Sci. U.S.A.">
        <title>A korarchaeal genome reveals new insights into the evolution of the Archaea.</title>
        <authorList>
            <person name="Elkins J.G."/>
            <person name="Podar M."/>
            <person name="Graham D.E."/>
            <person name="Makarova K.S."/>
            <person name="Wolf Y."/>
            <person name="Randau L."/>
            <person name="Hedlund B.P."/>
            <person name="Brochier-Armanet C."/>
            <person name="Kunin V."/>
            <person name="Anderson I."/>
            <person name="Lapidus A."/>
            <person name="Goltsman E."/>
            <person name="Barry K."/>
            <person name="Koonin E.V."/>
            <person name="Hugenholtz P."/>
            <person name="Kyrpides N."/>
            <person name="Wanner G."/>
            <person name="Richardson P."/>
            <person name="Keller M."/>
            <person name="Stetter K.O."/>
        </authorList>
    </citation>
    <scope>NUCLEOTIDE SEQUENCE [LARGE SCALE GENOMIC DNA]</scope>
    <source>
        <strain>OPF8</strain>
    </source>
</reference>
<protein>
    <recommendedName>
        <fullName evidence="1">Large ribosomal subunit protein uL18</fullName>
    </recommendedName>
    <alternativeName>
        <fullName evidence="2">50S ribosomal protein L18</fullName>
    </alternativeName>
</protein>
<keyword id="KW-1185">Reference proteome</keyword>
<keyword id="KW-0687">Ribonucleoprotein</keyword>
<keyword id="KW-0689">Ribosomal protein</keyword>
<keyword id="KW-0694">RNA-binding</keyword>
<keyword id="KW-0699">rRNA-binding</keyword>
<sequence length="195" mass="22037">MARSGRYKVKFRRRREGKTDYMKRLALLKSRKPRVVVRRTNRYIIVQFIGFKGEGDEVIAYAFSKELEKYGWPYGGKNLPAAYLTGYLAAMRAKKAGVTEAILDIGRFPSTKGSRLYAALKGVLDAGIDVPHSPEILPDEDRIRGEHIASFAEKLEEEGSLERQFSDYLRRGADPKIISEAFESVLERISAMSNG</sequence>
<comment type="function">
    <text evidence="1">This is one of the proteins that bind and probably mediate the attachment of the 5S RNA into the large ribosomal subunit, where it forms part of the central protuberance.</text>
</comment>
<comment type="subunit">
    <text evidence="1">Part of the 50S ribosomal subunit. Contacts the 5S and 23S rRNAs.</text>
</comment>
<comment type="similarity">
    <text evidence="1">Belongs to the universal ribosomal protein uL18 family.</text>
</comment>